<feature type="chain" id="PRO_0000074818" description="Nisin biosynthesis sensor protein NisK">
    <location>
        <begin position="1"/>
        <end position="447"/>
    </location>
</feature>
<feature type="transmembrane region" description="Helical" evidence="1">
    <location>
        <begin position="15"/>
        <end position="35"/>
    </location>
</feature>
<feature type="transmembrane region" description="Helical" evidence="1">
    <location>
        <begin position="147"/>
        <end position="167"/>
    </location>
</feature>
<feature type="domain" description="Histidine kinase" evidence="2">
    <location>
        <begin position="235"/>
        <end position="447"/>
    </location>
</feature>
<feature type="modified residue" description="Phosphohistidine; by autocatalysis" evidence="2">
    <location>
        <position position="238"/>
    </location>
</feature>
<name>NISK_LACLL</name>
<dbReference type="EC" id="2.7.13.3"/>
<dbReference type="EMBL" id="X76884">
    <property type="protein sequence ID" value="CAA54212.1"/>
    <property type="molecule type" value="Genomic_DNA"/>
</dbReference>
<dbReference type="PIR" id="S44133">
    <property type="entry name" value="S44133"/>
</dbReference>
<dbReference type="RefSeq" id="WP_014570412.1">
    <property type="nucleotide sequence ID" value="NZ_ML956318.1"/>
</dbReference>
<dbReference type="SMR" id="P42707"/>
<dbReference type="BRENDA" id="2.7.13.3">
    <property type="organism ID" value="2903"/>
</dbReference>
<dbReference type="GO" id="GO:0005886">
    <property type="term" value="C:plasma membrane"/>
    <property type="evidence" value="ECO:0007669"/>
    <property type="project" value="UniProtKB-SubCell"/>
</dbReference>
<dbReference type="GO" id="GO:0005524">
    <property type="term" value="F:ATP binding"/>
    <property type="evidence" value="ECO:0007669"/>
    <property type="project" value="UniProtKB-KW"/>
</dbReference>
<dbReference type="GO" id="GO:0004721">
    <property type="term" value="F:phosphoprotein phosphatase activity"/>
    <property type="evidence" value="ECO:0007669"/>
    <property type="project" value="TreeGrafter"/>
</dbReference>
<dbReference type="GO" id="GO:0000155">
    <property type="term" value="F:phosphorelay sensor kinase activity"/>
    <property type="evidence" value="ECO:0007669"/>
    <property type="project" value="InterPro"/>
</dbReference>
<dbReference type="GO" id="GO:0016036">
    <property type="term" value="P:cellular response to phosphate starvation"/>
    <property type="evidence" value="ECO:0007669"/>
    <property type="project" value="TreeGrafter"/>
</dbReference>
<dbReference type="CDD" id="cd16975">
    <property type="entry name" value="HATPase_SpaK_NisK-like"/>
    <property type="match status" value="1"/>
</dbReference>
<dbReference type="CDD" id="cd00082">
    <property type="entry name" value="HisKA"/>
    <property type="match status" value="1"/>
</dbReference>
<dbReference type="Gene3D" id="1.10.287.130">
    <property type="match status" value="1"/>
</dbReference>
<dbReference type="Gene3D" id="3.30.565.10">
    <property type="entry name" value="Histidine kinase-like ATPase, C-terminal domain"/>
    <property type="match status" value="1"/>
</dbReference>
<dbReference type="InterPro" id="IPR050351">
    <property type="entry name" value="2-comp_sensor_kinase"/>
</dbReference>
<dbReference type="InterPro" id="IPR036890">
    <property type="entry name" value="HATPase_C_sf"/>
</dbReference>
<dbReference type="InterPro" id="IPR005467">
    <property type="entry name" value="His_kinase_dom"/>
</dbReference>
<dbReference type="InterPro" id="IPR003661">
    <property type="entry name" value="HisK_dim/P_dom"/>
</dbReference>
<dbReference type="InterPro" id="IPR036097">
    <property type="entry name" value="HisK_dim/P_sf"/>
</dbReference>
<dbReference type="InterPro" id="IPR008358">
    <property type="entry name" value="Sig_transdc_His_kin/Pase_MprB"/>
</dbReference>
<dbReference type="InterPro" id="IPR044082">
    <property type="entry name" value="SpaK_NisK-like_HATPase"/>
</dbReference>
<dbReference type="PANTHER" id="PTHR45453">
    <property type="entry name" value="PHOSPHATE REGULON SENSOR PROTEIN PHOR"/>
    <property type="match status" value="1"/>
</dbReference>
<dbReference type="PANTHER" id="PTHR45453:SF1">
    <property type="entry name" value="PHOSPHATE REGULON SENSOR PROTEIN PHOR"/>
    <property type="match status" value="1"/>
</dbReference>
<dbReference type="Pfam" id="PF02518">
    <property type="entry name" value="HATPase_c"/>
    <property type="match status" value="1"/>
</dbReference>
<dbReference type="Pfam" id="PF00512">
    <property type="entry name" value="HisKA"/>
    <property type="match status" value="1"/>
</dbReference>
<dbReference type="PRINTS" id="PR01780">
    <property type="entry name" value="LANTIREGPROT"/>
</dbReference>
<dbReference type="SMART" id="SM00387">
    <property type="entry name" value="HATPase_c"/>
    <property type="match status" value="1"/>
</dbReference>
<dbReference type="SMART" id="SM00388">
    <property type="entry name" value="HisKA"/>
    <property type="match status" value="1"/>
</dbReference>
<dbReference type="SUPFAM" id="SSF55874">
    <property type="entry name" value="ATPase domain of HSP90 chaperone/DNA topoisomerase II/histidine kinase"/>
    <property type="match status" value="1"/>
</dbReference>
<dbReference type="SUPFAM" id="SSF47384">
    <property type="entry name" value="Homodimeric domain of signal transducing histidine kinase"/>
    <property type="match status" value="1"/>
</dbReference>
<dbReference type="PROSITE" id="PS50109">
    <property type="entry name" value="HIS_KIN"/>
    <property type="match status" value="1"/>
</dbReference>
<proteinExistence type="inferred from homology"/>
<comment type="function">
    <text>Member of the two-component regulatory system NisK/NisR involved in the regulation of the biosynthesis of lantibiotic nisin. NisK may function as a membrane-associated protein kinase that phosphorylates NisR in response to environmental signals.</text>
</comment>
<comment type="catalytic activity">
    <reaction>
        <text>ATP + protein L-histidine = ADP + protein N-phospho-L-histidine.</text>
        <dbReference type="EC" id="2.7.13.3"/>
    </reaction>
</comment>
<comment type="subcellular location">
    <subcellularLocation>
        <location evidence="3">Cell membrane</location>
        <topology evidence="3">Multi-pass membrane protein</topology>
    </subcellularLocation>
</comment>
<gene>
    <name type="primary">nisK</name>
</gene>
<organism>
    <name type="scientific">Lactococcus lactis subsp. lactis</name>
    <name type="common">Streptococcus lactis</name>
    <dbReference type="NCBI Taxonomy" id="1360"/>
    <lineage>
        <taxon>Bacteria</taxon>
        <taxon>Bacillati</taxon>
        <taxon>Bacillota</taxon>
        <taxon>Bacilli</taxon>
        <taxon>Lactobacillales</taxon>
        <taxon>Streptococcaceae</taxon>
        <taxon>Lactococcus</taxon>
    </lineage>
</organism>
<sequence length="447" mass="51320">MGKKYSMRRRIWQAVIEIIIGTCLLILLLLGLTFFLRQIGQISGSETIRLSLDSDNLTISDIERDMKHYPYDYIIFDNDTSKILGGHYVKSDVPSFVASKQSSHNITEGEITYTYSSNKHFSVVLRQNSMPEFTNHTLRSISYNQFTYLFFFLGEIILIIFSVYHLIREFSKNFQAVQKIALKMGEITTFPEQEESKIIEFDQVLNNLYSKSKELAFLIEAERHEKHDLSFQVAALSHDVKTPLTVLKGNIELLEMTEVNEQQADFIESMKNSLTVFDKYFNTMISYTKLLNDENDYKATISLEDFLIDLSVELEELSTTYQVDYQLVKKTDLTTFYGNTLALSRALINIFVNACQYAKEGEKIVSLSIYDDEKYLYFEIWNNGHPFSEQAKKNAGKLFFTEDTGRSGKHYGIGLSFAQGVALKHQGNLILSNPQKGGAEVILKIKK</sequence>
<keyword id="KW-0067">ATP-binding</keyword>
<keyword id="KW-1003">Cell membrane</keyword>
<keyword id="KW-0418">Kinase</keyword>
<keyword id="KW-0472">Membrane</keyword>
<keyword id="KW-0547">Nucleotide-binding</keyword>
<keyword id="KW-0597">Phosphoprotein</keyword>
<keyword id="KW-0808">Transferase</keyword>
<keyword id="KW-0812">Transmembrane</keyword>
<keyword id="KW-1133">Transmembrane helix</keyword>
<keyword id="KW-0902">Two-component regulatory system</keyword>
<evidence type="ECO:0000255" key="1"/>
<evidence type="ECO:0000255" key="2">
    <source>
        <dbReference type="PROSITE-ProRule" id="PRU00107"/>
    </source>
</evidence>
<evidence type="ECO:0000305" key="3"/>
<protein>
    <recommendedName>
        <fullName>Nisin biosynthesis sensor protein NisK</fullName>
        <ecNumber>2.7.13.3</ecNumber>
    </recommendedName>
</protein>
<reference key="1">
    <citation type="journal article" date="1994" name="Appl. Environ. Microbiol.">
        <title>Regulation of nisin biosynthesis and immunity in Lactococcus lactis 6F3.</title>
        <authorList>
            <person name="Engelke G."/>
            <person name="Gutowski-Eckel Z."/>
            <person name="Kiesau P."/>
            <person name="Siegers K."/>
            <person name="Hammelmann M."/>
            <person name="Entian K.-D."/>
        </authorList>
    </citation>
    <scope>NUCLEOTIDE SEQUENCE [GENOMIC DNA]</scope>
    <source>
        <strain>6F3</strain>
    </source>
</reference>
<accession>P42707</accession>